<feature type="chain" id="PRO_0000303983" description="Putative uncharacterized protein C806.11">
    <location>
        <begin position="1"/>
        <end position="72"/>
    </location>
</feature>
<feature type="transmembrane region" description="Helical" evidence="1">
    <location>
        <begin position="23"/>
        <end position="45"/>
    </location>
</feature>
<keyword id="KW-0472">Membrane</keyword>
<keyword id="KW-1185">Reference proteome</keyword>
<keyword id="KW-0812">Transmembrane</keyword>
<keyword id="KW-1133">Transmembrane helix</keyword>
<sequence>MLCPTHGPTTWNPHSCTVVEKCITNLLITTILLCFFNATTYWKLFFGAMFDFIHYQLLFRNSLSEILLLGLG</sequence>
<name>YI9B_SCHPO</name>
<evidence type="ECO:0000255" key="1"/>
<evidence type="ECO:0000305" key="2"/>
<gene>
    <name type="ORF">SPAC806.11</name>
</gene>
<comment type="subcellular location">
    <subcellularLocation>
        <location evidence="2">Membrane</location>
        <topology evidence="2">Single-pass membrane protein</topology>
    </subcellularLocation>
</comment>
<reference key="1">
    <citation type="journal article" date="2002" name="Nature">
        <title>The genome sequence of Schizosaccharomyces pombe.</title>
        <authorList>
            <person name="Wood V."/>
            <person name="Gwilliam R."/>
            <person name="Rajandream M.A."/>
            <person name="Lyne M.H."/>
            <person name="Lyne R."/>
            <person name="Stewart A."/>
            <person name="Sgouros J.G."/>
            <person name="Peat N."/>
            <person name="Hayles J."/>
            <person name="Baker S.G."/>
            <person name="Basham D."/>
            <person name="Bowman S."/>
            <person name="Brooks K."/>
            <person name="Brown D."/>
            <person name="Brown S."/>
            <person name="Chillingworth T."/>
            <person name="Churcher C.M."/>
            <person name="Collins M."/>
            <person name="Connor R."/>
            <person name="Cronin A."/>
            <person name="Davis P."/>
            <person name="Feltwell T."/>
            <person name="Fraser A."/>
            <person name="Gentles S."/>
            <person name="Goble A."/>
            <person name="Hamlin N."/>
            <person name="Harris D.E."/>
            <person name="Hidalgo J."/>
            <person name="Hodgson G."/>
            <person name="Holroyd S."/>
            <person name="Hornsby T."/>
            <person name="Howarth S."/>
            <person name="Huckle E.J."/>
            <person name="Hunt S."/>
            <person name="Jagels K."/>
            <person name="James K.D."/>
            <person name="Jones L."/>
            <person name="Jones M."/>
            <person name="Leather S."/>
            <person name="McDonald S."/>
            <person name="McLean J."/>
            <person name="Mooney P."/>
            <person name="Moule S."/>
            <person name="Mungall K.L."/>
            <person name="Murphy L.D."/>
            <person name="Niblett D."/>
            <person name="Odell C."/>
            <person name="Oliver K."/>
            <person name="O'Neil S."/>
            <person name="Pearson D."/>
            <person name="Quail M.A."/>
            <person name="Rabbinowitsch E."/>
            <person name="Rutherford K.M."/>
            <person name="Rutter S."/>
            <person name="Saunders D."/>
            <person name="Seeger K."/>
            <person name="Sharp S."/>
            <person name="Skelton J."/>
            <person name="Simmonds M.N."/>
            <person name="Squares R."/>
            <person name="Squares S."/>
            <person name="Stevens K."/>
            <person name="Taylor K."/>
            <person name="Taylor R.G."/>
            <person name="Tivey A."/>
            <person name="Walsh S.V."/>
            <person name="Warren T."/>
            <person name="Whitehead S."/>
            <person name="Woodward J.R."/>
            <person name="Volckaert G."/>
            <person name="Aert R."/>
            <person name="Robben J."/>
            <person name="Grymonprez B."/>
            <person name="Weltjens I."/>
            <person name="Vanstreels E."/>
            <person name="Rieger M."/>
            <person name="Schaefer M."/>
            <person name="Mueller-Auer S."/>
            <person name="Gabel C."/>
            <person name="Fuchs M."/>
            <person name="Duesterhoeft A."/>
            <person name="Fritzc C."/>
            <person name="Holzer E."/>
            <person name="Moestl D."/>
            <person name="Hilbert H."/>
            <person name="Borzym K."/>
            <person name="Langer I."/>
            <person name="Beck A."/>
            <person name="Lehrach H."/>
            <person name="Reinhardt R."/>
            <person name="Pohl T.M."/>
            <person name="Eger P."/>
            <person name="Zimmermann W."/>
            <person name="Wedler H."/>
            <person name="Wambutt R."/>
            <person name="Purnelle B."/>
            <person name="Goffeau A."/>
            <person name="Cadieu E."/>
            <person name="Dreano S."/>
            <person name="Gloux S."/>
            <person name="Lelaure V."/>
            <person name="Mottier S."/>
            <person name="Galibert F."/>
            <person name="Aves S.J."/>
            <person name="Xiang Z."/>
            <person name="Hunt C."/>
            <person name="Moore K."/>
            <person name="Hurst S.M."/>
            <person name="Lucas M."/>
            <person name="Rochet M."/>
            <person name="Gaillardin C."/>
            <person name="Tallada V.A."/>
            <person name="Garzon A."/>
            <person name="Thode G."/>
            <person name="Daga R.R."/>
            <person name="Cruzado L."/>
            <person name="Jimenez J."/>
            <person name="Sanchez M."/>
            <person name="del Rey F."/>
            <person name="Benito J."/>
            <person name="Dominguez A."/>
            <person name="Revuelta J.L."/>
            <person name="Moreno S."/>
            <person name="Armstrong J."/>
            <person name="Forsburg S.L."/>
            <person name="Cerutti L."/>
            <person name="Lowe T."/>
            <person name="McCombie W.R."/>
            <person name="Paulsen I."/>
            <person name="Potashkin J."/>
            <person name="Shpakovski G.V."/>
            <person name="Ussery D."/>
            <person name="Barrell B.G."/>
            <person name="Nurse P."/>
        </authorList>
    </citation>
    <scope>NUCLEOTIDE SEQUENCE [LARGE SCALE GENOMIC DNA]</scope>
    <source>
        <strain>972 / ATCC 24843</strain>
    </source>
</reference>
<proteinExistence type="predicted"/>
<protein>
    <recommendedName>
        <fullName>Putative uncharacterized protein C806.11</fullName>
    </recommendedName>
</protein>
<dbReference type="EMBL" id="CU329670">
    <property type="protein sequence ID" value="CAO77636.1"/>
    <property type="molecule type" value="Genomic_DNA"/>
</dbReference>
<dbReference type="RefSeq" id="XP_001713036.1">
    <property type="nucleotide sequence ID" value="XM_001712984.2"/>
</dbReference>
<dbReference type="SMR" id="A6X969"/>
<dbReference type="PaxDb" id="4896-SPAC806.11.1"/>
<dbReference type="EnsemblFungi" id="SPAC806.11.1">
    <property type="protein sequence ID" value="SPAC806.11.1:pep"/>
    <property type="gene ID" value="SPAC806.11"/>
</dbReference>
<dbReference type="PomBase" id="SPAC806.11"/>
<dbReference type="VEuPathDB" id="FungiDB:SPAC806.11"/>
<dbReference type="HOGENOM" id="CLU_2723635_0_0_1"/>
<dbReference type="InParanoid" id="A6X969"/>
<dbReference type="PRO" id="PR:A6X969"/>
<dbReference type="Proteomes" id="UP000002485">
    <property type="component" value="Chromosome I"/>
</dbReference>
<dbReference type="GO" id="GO:0016020">
    <property type="term" value="C:membrane"/>
    <property type="evidence" value="ECO:0007669"/>
    <property type="project" value="UniProtKB-SubCell"/>
</dbReference>
<accession>A6X969</accession>
<organism>
    <name type="scientific">Schizosaccharomyces pombe (strain 972 / ATCC 24843)</name>
    <name type="common">Fission yeast</name>
    <dbReference type="NCBI Taxonomy" id="284812"/>
    <lineage>
        <taxon>Eukaryota</taxon>
        <taxon>Fungi</taxon>
        <taxon>Dikarya</taxon>
        <taxon>Ascomycota</taxon>
        <taxon>Taphrinomycotina</taxon>
        <taxon>Schizosaccharomycetes</taxon>
        <taxon>Schizosaccharomycetales</taxon>
        <taxon>Schizosaccharomycetaceae</taxon>
        <taxon>Schizosaccharomyces</taxon>
    </lineage>
</organism>